<gene>
    <name evidence="1" type="primary">lipA</name>
    <name type="ordered locus">Swoo_3715</name>
</gene>
<comment type="function">
    <text evidence="1">Catalyzes the radical-mediated insertion of two sulfur atoms into the C-6 and C-8 positions of the octanoyl moiety bound to the lipoyl domains of lipoate-dependent enzymes, thereby converting the octanoylated domains into lipoylated derivatives.</text>
</comment>
<comment type="catalytic activity">
    <reaction evidence="1">
        <text>[[Fe-S] cluster scaffold protein carrying a second [4Fe-4S](2+) cluster] + N(6)-octanoyl-L-lysyl-[protein] + 2 oxidized [2Fe-2S]-[ferredoxin] + 2 S-adenosyl-L-methionine + 4 H(+) = [[Fe-S] cluster scaffold protein] + N(6)-[(R)-dihydrolipoyl]-L-lysyl-[protein] + 4 Fe(3+) + 2 hydrogen sulfide + 2 5'-deoxyadenosine + 2 L-methionine + 2 reduced [2Fe-2S]-[ferredoxin]</text>
        <dbReference type="Rhea" id="RHEA:16585"/>
        <dbReference type="Rhea" id="RHEA-COMP:9928"/>
        <dbReference type="Rhea" id="RHEA-COMP:10000"/>
        <dbReference type="Rhea" id="RHEA-COMP:10001"/>
        <dbReference type="Rhea" id="RHEA-COMP:10475"/>
        <dbReference type="Rhea" id="RHEA-COMP:14568"/>
        <dbReference type="Rhea" id="RHEA-COMP:14569"/>
        <dbReference type="ChEBI" id="CHEBI:15378"/>
        <dbReference type="ChEBI" id="CHEBI:17319"/>
        <dbReference type="ChEBI" id="CHEBI:29034"/>
        <dbReference type="ChEBI" id="CHEBI:29919"/>
        <dbReference type="ChEBI" id="CHEBI:33722"/>
        <dbReference type="ChEBI" id="CHEBI:33737"/>
        <dbReference type="ChEBI" id="CHEBI:33738"/>
        <dbReference type="ChEBI" id="CHEBI:57844"/>
        <dbReference type="ChEBI" id="CHEBI:59789"/>
        <dbReference type="ChEBI" id="CHEBI:78809"/>
        <dbReference type="ChEBI" id="CHEBI:83100"/>
        <dbReference type="EC" id="2.8.1.8"/>
    </reaction>
</comment>
<comment type="cofactor">
    <cofactor evidence="1">
        <name>[4Fe-4S] cluster</name>
        <dbReference type="ChEBI" id="CHEBI:49883"/>
    </cofactor>
    <text evidence="1">Binds 2 [4Fe-4S] clusters per subunit. One cluster is coordinated with 3 cysteines and an exchangeable S-adenosyl-L-methionine.</text>
</comment>
<comment type="pathway">
    <text evidence="1">Protein modification; protein lipoylation via endogenous pathway; protein N(6)-(lipoyl)lysine from octanoyl-[acyl-carrier-protein]: step 2/2.</text>
</comment>
<comment type="subcellular location">
    <subcellularLocation>
        <location evidence="1">Cytoplasm</location>
    </subcellularLocation>
</comment>
<comment type="similarity">
    <text evidence="1">Belongs to the radical SAM superfamily. Lipoyl synthase family.</text>
</comment>
<dbReference type="EC" id="2.8.1.8" evidence="1"/>
<dbReference type="EMBL" id="CP000961">
    <property type="protein sequence ID" value="ACA87975.1"/>
    <property type="molecule type" value="Genomic_DNA"/>
</dbReference>
<dbReference type="RefSeq" id="WP_012326307.1">
    <property type="nucleotide sequence ID" value="NC_010506.1"/>
</dbReference>
<dbReference type="SMR" id="B1KDX3"/>
<dbReference type="STRING" id="392500.Swoo_3715"/>
<dbReference type="KEGG" id="swd:Swoo_3715"/>
<dbReference type="eggNOG" id="COG0320">
    <property type="taxonomic scope" value="Bacteria"/>
</dbReference>
<dbReference type="HOGENOM" id="CLU_033144_2_1_6"/>
<dbReference type="UniPathway" id="UPA00538">
    <property type="reaction ID" value="UER00593"/>
</dbReference>
<dbReference type="Proteomes" id="UP000002168">
    <property type="component" value="Chromosome"/>
</dbReference>
<dbReference type="GO" id="GO:0005737">
    <property type="term" value="C:cytoplasm"/>
    <property type="evidence" value="ECO:0007669"/>
    <property type="project" value="UniProtKB-SubCell"/>
</dbReference>
<dbReference type="GO" id="GO:0051539">
    <property type="term" value="F:4 iron, 4 sulfur cluster binding"/>
    <property type="evidence" value="ECO:0007669"/>
    <property type="project" value="UniProtKB-UniRule"/>
</dbReference>
<dbReference type="GO" id="GO:0016992">
    <property type="term" value="F:lipoate synthase activity"/>
    <property type="evidence" value="ECO:0007669"/>
    <property type="project" value="UniProtKB-UniRule"/>
</dbReference>
<dbReference type="GO" id="GO:0046872">
    <property type="term" value="F:metal ion binding"/>
    <property type="evidence" value="ECO:0007669"/>
    <property type="project" value="UniProtKB-KW"/>
</dbReference>
<dbReference type="CDD" id="cd01335">
    <property type="entry name" value="Radical_SAM"/>
    <property type="match status" value="1"/>
</dbReference>
<dbReference type="FunFam" id="3.20.20.70:FF:000023">
    <property type="entry name" value="Lipoyl synthase"/>
    <property type="match status" value="1"/>
</dbReference>
<dbReference type="Gene3D" id="3.20.20.70">
    <property type="entry name" value="Aldolase class I"/>
    <property type="match status" value="1"/>
</dbReference>
<dbReference type="HAMAP" id="MF_00206">
    <property type="entry name" value="Lipoyl_synth"/>
    <property type="match status" value="1"/>
</dbReference>
<dbReference type="InterPro" id="IPR013785">
    <property type="entry name" value="Aldolase_TIM"/>
</dbReference>
<dbReference type="InterPro" id="IPR006638">
    <property type="entry name" value="Elp3/MiaA/NifB-like_rSAM"/>
</dbReference>
<dbReference type="InterPro" id="IPR031691">
    <property type="entry name" value="LIAS_N"/>
</dbReference>
<dbReference type="InterPro" id="IPR003698">
    <property type="entry name" value="Lipoyl_synth"/>
</dbReference>
<dbReference type="InterPro" id="IPR007197">
    <property type="entry name" value="rSAM"/>
</dbReference>
<dbReference type="NCBIfam" id="TIGR00510">
    <property type="entry name" value="lipA"/>
    <property type="match status" value="1"/>
</dbReference>
<dbReference type="NCBIfam" id="NF004019">
    <property type="entry name" value="PRK05481.1"/>
    <property type="match status" value="1"/>
</dbReference>
<dbReference type="NCBIfam" id="NF009544">
    <property type="entry name" value="PRK12928.1"/>
    <property type="match status" value="1"/>
</dbReference>
<dbReference type="PANTHER" id="PTHR10949">
    <property type="entry name" value="LIPOYL SYNTHASE"/>
    <property type="match status" value="1"/>
</dbReference>
<dbReference type="PANTHER" id="PTHR10949:SF0">
    <property type="entry name" value="LIPOYL SYNTHASE, MITOCHONDRIAL"/>
    <property type="match status" value="1"/>
</dbReference>
<dbReference type="Pfam" id="PF16881">
    <property type="entry name" value="LIAS_N"/>
    <property type="match status" value="1"/>
</dbReference>
<dbReference type="Pfam" id="PF04055">
    <property type="entry name" value="Radical_SAM"/>
    <property type="match status" value="1"/>
</dbReference>
<dbReference type="PIRSF" id="PIRSF005963">
    <property type="entry name" value="Lipoyl_synth"/>
    <property type="match status" value="1"/>
</dbReference>
<dbReference type="SFLD" id="SFLDF00271">
    <property type="entry name" value="lipoyl_synthase"/>
    <property type="match status" value="1"/>
</dbReference>
<dbReference type="SFLD" id="SFLDG01058">
    <property type="entry name" value="lipoyl_synthase_like"/>
    <property type="match status" value="1"/>
</dbReference>
<dbReference type="SMART" id="SM00729">
    <property type="entry name" value="Elp3"/>
    <property type="match status" value="1"/>
</dbReference>
<dbReference type="SUPFAM" id="SSF102114">
    <property type="entry name" value="Radical SAM enzymes"/>
    <property type="match status" value="1"/>
</dbReference>
<dbReference type="PROSITE" id="PS51918">
    <property type="entry name" value="RADICAL_SAM"/>
    <property type="match status" value="1"/>
</dbReference>
<feature type="chain" id="PRO_1000099635" description="Lipoyl synthase">
    <location>
        <begin position="1"/>
        <end position="321"/>
    </location>
</feature>
<feature type="domain" description="Radical SAM core" evidence="2">
    <location>
        <begin position="80"/>
        <end position="297"/>
    </location>
</feature>
<feature type="binding site" evidence="1">
    <location>
        <position position="68"/>
    </location>
    <ligand>
        <name>[4Fe-4S] cluster</name>
        <dbReference type="ChEBI" id="CHEBI:49883"/>
        <label>1</label>
    </ligand>
</feature>
<feature type="binding site" evidence="1">
    <location>
        <position position="73"/>
    </location>
    <ligand>
        <name>[4Fe-4S] cluster</name>
        <dbReference type="ChEBI" id="CHEBI:49883"/>
        <label>1</label>
    </ligand>
</feature>
<feature type="binding site" evidence="1">
    <location>
        <position position="79"/>
    </location>
    <ligand>
        <name>[4Fe-4S] cluster</name>
        <dbReference type="ChEBI" id="CHEBI:49883"/>
        <label>1</label>
    </ligand>
</feature>
<feature type="binding site" evidence="1">
    <location>
        <position position="94"/>
    </location>
    <ligand>
        <name>[4Fe-4S] cluster</name>
        <dbReference type="ChEBI" id="CHEBI:49883"/>
        <label>2</label>
        <note>4Fe-4S-S-AdoMet</note>
    </ligand>
</feature>
<feature type="binding site" evidence="1">
    <location>
        <position position="98"/>
    </location>
    <ligand>
        <name>[4Fe-4S] cluster</name>
        <dbReference type="ChEBI" id="CHEBI:49883"/>
        <label>2</label>
        <note>4Fe-4S-S-AdoMet</note>
    </ligand>
</feature>
<feature type="binding site" evidence="1">
    <location>
        <position position="101"/>
    </location>
    <ligand>
        <name>[4Fe-4S] cluster</name>
        <dbReference type="ChEBI" id="CHEBI:49883"/>
        <label>2</label>
        <note>4Fe-4S-S-AdoMet</note>
    </ligand>
</feature>
<feature type="binding site" evidence="1">
    <location>
        <position position="308"/>
    </location>
    <ligand>
        <name>[4Fe-4S] cluster</name>
        <dbReference type="ChEBI" id="CHEBI:49883"/>
        <label>1</label>
    </ligand>
</feature>
<keyword id="KW-0004">4Fe-4S</keyword>
<keyword id="KW-0963">Cytoplasm</keyword>
<keyword id="KW-0408">Iron</keyword>
<keyword id="KW-0411">Iron-sulfur</keyword>
<keyword id="KW-0479">Metal-binding</keyword>
<keyword id="KW-1185">Reference proteome</keyword>
<keyword id="KW-0949">S-adenosyl-L-methionine</keyword>
<keyword id="KW-0808">Transferase</keyword>
<organism>
    <name type="scientific">Shewanella woodyi (strain ATCC 51908 / MS32)</name>
    <dbReference type="NCBI Taxonomy" id="392500"/>
    <lineage>
        <taxon>Bacteria</taxon>
        <taxon>Pseudomonadati</taxon>
        <taxon>Pseudomonadota</taxon>
        <taxon>Gammaproteobacteria</taxon>
        <taxon>Alteromonadales</taxon>
        <taxon>Shewanellaceae</taxon>
        <taxon>Shewanella</taxon>
    </lineage>
</organism>
<protein>
    <recommendedName>
        <fullName evidence="1">Lipoyl synthase</fullName>
        <ecNumber evidence="1">2.8.1.8</ecNumber>
    </recommendedName>
    <alternativeName>
        <fullName evidence="1">Lip-syn</fullName>
        <shortName evidence="1">LS</shortName>
    </alternativeName>
    <alternativeName>
        <fullName evidence="1">Lipoate synthase</fullName>
    </alternativeName>
    <alternativeName>
        <fullName evidence="1">Lipoic acid synthase</fullName>
    </alternativeName>
    <alternativeName>
        <fullName evidence="1">Sulfur insertion protein LipA</fullName>
    </alternativeName>
</protein>
<proteinExistence type="inferred from homology"/>
<reference key="1">
    <citation type="submission" date="2008-02" db="EMBL/GenBank/DDBJ databases">
        <title>Complete sequence of Shewanella woodyi ATCC 51908.</title>
        <authorList>
            <consortium name="US DOE Joint Genome Institute"/>
            <person name="Copeland A."/>
            <person name="Lucas S."/>
            <person name="Lapidus A."/>
            <person name="Glavina del Rio T."/>
            <person name="Dalin E."/>
            <person name="Tice H."/>
            <person name="Bruce D."/>
            <person name="Goodwin L."/>
            <person name="Pitluck S."/>
            <person name="Sims D."/>
            <person name="Brettin T."/>
            <person name="Detter J.C."/>
            <person name="Han C."/>
            <person name="Kuske C.R."/>
            <person name="Schmutz J."/>
            <person name="Larimer F."/>
            <person name="Land M."/>
            <person name="Hauser L."/>
            <person name="Kyrpides N."/>
            <person name="Lykidis A."/>
            <person name="Zhao J.-S."/>
            <person name="Richardson P."/>
        </authorList>
    </citation>
    <scope>NUCLEOTIDE SEQUENCE [LARGE SCALE GENOMIC DNA]</scope>
    <source>
        <strain>ATCC 51908 / MS32</strain>
    </source>
</reference>
<accession>B1KDX3</accession>
<evidence type="ECO:0000255" key="1">
    <source>
        <dbReference type="HAMAP-Rule" id="MF_00206"/>
    </source>
</evidence>
<evidence type="ECO:0000255" key="2">
    <source>
        <dbReference type="PROSITE-ProRule" id="PRU01266"/>
    </source>
</evidence>
<name>LIPA_SHEWM</name>
<sequence>MSRPERLQPGVKLRDADKVSRIPVKVVPSERETMLRKPDWLRVKLPSSSQRIDEIKQALRSNGLHSVCEEASCPNLAECFNHGTATFMILGAICTRRCPFCDVAHGRPLKPDAQEPKKLAQTIKDMKLKYVVITSVDRDDLRDGGAQHFADCIREIRLLNPEIKIETLVPDFRGRIDAALDILATEPPDVFNHNLETAPMHYRKARPGANYQWSLDLLKKFKERHPDVPTKSGLMMGLGETNEEIAQVLKDLRAHNVEMLTLGQYLQPSKFHLPVERYVPPAEFDELRVFAEEIGFTHAACGPMVRSSYHADLQAQGKEVK</sequence>